<evidence type="ECO:0000255" key="1">
    <source>
        <dbReference type="HAMAP-Rule" id="MF_00281"/>
    </source>
</evidence>
<protein>
    <recommendedName>
        <fullName evidence="1">Phenylalanine--tRNA ligase alpha subunit</fullName>
        <ecNumber evidence="1">6.1.1.20</ecNumber>
    </recommendedName>
    <alternativeName>
        <fullName evidence="1">Phenylalanyl-tRNA synthetase alpha subunit</fullName>
        <shortName evidence="1">PheRS</shortName>
    </alternativeName>
</protein>
<feature type="chain" id="PRO_1000006887" description="Phenylalanine--tRNA ligase alpha subunit">
    <location>
        <begin position="1"/>
        <end position="349"/>
    </location>
</feature>
<feature type="binding site" evidence="1">
    <location>
        <position position="258"/>
    </location>
    <ligand>
        <name>Mg(2+)</name>
        <dbReference type="ChEBI" id="CHEBI:18420"/>
        <note>shared with beta subunit</note>
    </ligand>
</feature>
<accession>A8EZ06</accession>
<keyword id="KW-0030">Aminoacyl-tRNA synthetase</keyword>
<keyword id="KW-0067">ATP-binding</keyword>
<keyword id="KW-0963">Cytoplasm</keyword>
<keyword id="KW-0436">Ligase</keyword>
<keyword id="KW-0460">Magnesium</keyword>
<keyword id="KW-0479">Metal-binding</keyword>
<keyword id="KW-0547">Nucleotide-binding</keyword>
<keyword id="KW-0648">Protein biosynthesis</keyword>
<gene>
    <name evidence="1" type="primary">pheS</name>
    <name type="ordered locus">A1E_03270</name>
</gene>
<organism>
    <name type="scientific">Rickettsia canadensis (strain McKiel)</name>
    <dbReference type="NCBI Taxonomy" id="293613"/>
    <lineage>
        <taxon>Bacteria</taxon>
        <taxon>Pseudomonadati</taxon>
        <taxon>Pseudomonadota</taxon>
        <taxon>Alphaproteobacteria</taxon>
        <taxon>Rickettsiales</taxon>
        <taxon>Rickettsiaceae</taxon>
        <taxon>Rickettsieae</taxon>
        <taxon>Rickettsia</taxon>
        <taxon>belli group</taxon>
    </lineage>
</organism>
<sequence>MENIAKILRLAEEKILLVQNLKDLQEYKVEFLGKNGIVTGELKKLGSLNEQARKEFGLKINKLKDKIQNTIKVKEEILEEQELNLKLAADKIDLTIPARKYKQGSIHPITQCSEELIQVFSKFGFTINNGPNIEDTFHNFTALNFEDDHPARQMHDTFYLKGQEDSKPMLLRTHTSTVQIRAMKNGNPPFRFIALGRTYRSDSDMTHTPMFHQIEGLVIDKNINMGHLKYVITEFIRSFFENSHIELRFRPSFFPFTEPSAEVDIRMNKNDQWLEVLGCGMVHPNVLKNVGIDSSEYQGFAFGLGVERFAMLKYNIKDLRQFFEGDMRWLKHYNFGGFDIPNLAGGLTK</sequence>
<comment type="catalytic activity">
    <reaction evidence="1">
        <text>tRNA(Phe) + L-phenylalanine + ATP = L-phenylalanyl-tRNA(Phe) + AMP + diphosphate + H(+)</text>
        <dbReference type="Rhea" id="RHEA:19413"/>
        <dbReference type="Rhea" id="RHEA-COMP:9668"/>
        <dbReference type="Rhea" id="RHEA-COMP:9699"/>
        <dbReference type="ChEBI" id="CHEBI:15378"/>
        <dbReference type="ChEBI" id="CHEBI:30616"/>
        <dbReference type="ChEBI" id="CHEBI:33019"/>
        <dbReference type="ChEBI" id="CHEBI:58095"/>
        <dbReference type="ChEBI" id="CHEBI:78442"/>
        <dbReference type="ChEBI" id="CHEBI:78531"/>
        <dbReference type="ChEBI" id="CHEBI:456215"/>
        <dbReference type="EC" id="6.1.1.20"/>
    </reaction>
</comment>
<comment type="cofactor">
    <cofactor evidence="1">
        <name>Mg(2+)</name>
        <dbReference type="ChEBI" id="CHEBI:18420"/>
    </cofactor>
    <text evidence="1">Binds 2 magnesium ions per tetramer.</text>
</comment>
<comment type="subunit">
    <text evidence="1">Tetramer of two alpha and two beta subunits.</text>
</comment>
<comment type="subcellular location">
    <subcellularLocation>
        <location evidence="1">Cytoplasm</location>
    </subcellularLocation>
</comment>
<comment type="similarity">
    <text evidence="1">Belongs to the class-II aminoacyl-tRNA synthetase family. Phe-tRNA synthetase alpha subunit type 1 subfamily.</text>
</comment>
<dbReference type="EC" id="6.1.1.20" evidence="1"/>
<dbReference type="EMBL" id="CP000409">
    <property type="protein sequence ID" value="ABV73589.1"/>
    <property type="molecule type" value="Genomic_DNA"/>
</dbReference>
<dbReference type="RefSeq" id="WP_012148785.1">
    <property type="nucleotide sequence ID" value="NC_009879.1"/>
</dbReference>
<dbReference type="SMR" id="A8EZ06"/>
<dbReference type="STRING" id="293613.A1E_03270"/>
<dbReference type="KEGG" id="rcm:A1E_03270"/>
<dbReference type="eggNOG" id="COG0016">
    <property type="taxonomic scope" value="Bacteria"/>
</dbReference>
<dbReference type="HOGENOM" id="CLU_025086_0_1_5"/>
<dbReference type="Proteomes" id="UP000007056">
    <property type="component" value="Chromosome"/>
</dbReference>
<dbReference type="GO" id="GO:0005737">
    <property type="term" value="C:cytoplasm"/>
    <property type="evidence" value="ECO:0007669"/>
    <property type="project" value="UniProtKB-SubCell"/>
</dbReference>
<dbReference type="GO" id="GO:0005524">
    <property type="term" value="F:ATP binding"/>
    <property type="evidence" value="ECO:0007669"/>
    <property type="project" value="UniProtKB-UniRule"/>
</dbReference>
<dbReference type="GO" id="GO:0000287">
    <property type="term" value="F:magnesium ion binding"/>
    <property type="evidence" value="ECO:0007669"/>
    <property type="project" value="UniProtKB-UniRule"/>
</dbReference>
<dbReference type="GO" id="GO:0004826">
    <property type="term" value="F:phenylalanine-tRNA ligase activity"/>
    <property type="evidence" value="ECO:0007669"/>
    <property type="project" value="UniProtKB-UniRule"/>
</dbReference>
<dbReference type="GO" id="GO:0000049">
    <property type="term" value="F:tRNA binding"/>
    <property type="evidence" value="ECO:0007669"/>
    <property type="project" value="InterPro"/>
</dbReference>
<dbReference type="GO" id="GO:0006432">
    <property type="term" value="P:phenylalanyl-tRNA aminoacylation"/>
    <property type="evidence" value="ECO:0007669"/>
    <property type="project" value="UniProtKB-UniRule"/>
</dbReference>
<dbReference type="CDD" id="cd00496">
    <property type="entry name" value="PheRS_alpha_core"/>
    <property type="match status" value="1"/>
</dbReference>
<dbReference type="FunFam" id="3.30.930.10:FF:000003">
    <property type="entry name" value="Phenylalanine--tRNA ligase alpha subunit"/>
    <property type="match status" value="1"/>
</dbReference>
<dbReference type="Gene3D" id="3.30.930.10">
    <property type="entry name" value="Bira Bifunctional Protein, Domain 2"/>
    <property type="match status" value="1"/>
</dbReference>
<dbReference type="HAMAP" id="MF_00281">
    <property type="entry name" value="Phe_tRNA_synth_alpha1"/>
    <property type="match status" value="1"/>
</dbReference>
<dbReference type="InterPro" id="IPR006195">
    <property type="entry name" value="aa-tRNA-synth_II"/>
</dbReference>
<dbReference type="InterPro" id="IPR045864">
    <property type="entry name" value="aa-tRNA-synth_II/BPL/LPL"/>
</dbReference>
<dbReference type="InterPro" id="IPR004529">
    <property type="entry name" value="Phe-tRNA-synth_IIc_asu"/>
</dbReference>
<dbReference type="InterPro" id="IPR004188">
    <property type="entry name" value="Phe-tRNA_ligase_II_N"/>
</dbReference>
<dbReference type="InterPro" id="IPR022911">
    <property type="entry name" value="Phe_tRNA_ligase_alpha1_bac"/>
</dbReference>
<dbReference type="InterPro" id="IPR002319">
    <property type="entry name" value="Phenylalanyl-tRNA_Synthase"/>
</dbReference>
<dbReference type="InterPro" id="IPR010978">
    <property type="entry name" value="tRNA-bd_arm"/>
</dbReference>
<dbReference type="NCBIfam" id="TIGR00468">
    <property type="entry name" value="pheS"/>
    <property type="match status" value="1"/>
</dbReference>
<dbReference type="PANTHER" id="PTHR11538:SF41">
    <property type="entry name" value="PHENYLALANINE--TRNA LIGASE, MITOCHONDRIAL"/>
    <property type="match status" value="1"/>
</dbReference>
<dbReference type="PANTHER" id="PTHR11538">
    <property type="entry name" value="PHENYLALANYL-TRNA SYNTHETASE"/>
    <property type="match status" value="1"/>
</dbReference>
<dbReference type="Pfam" id="PF02912">
    <property type="entry name" value="Phe_tRNA-synt_N"/>
    <property type="match status" value="1"/>
</dbReference>
<dbReference type="Pfam" id="PF01409">
    <property type="entry name" value="tRNA-synt_2d"/>
    <property type="match status" value="1"/>
</dbReference>
<dbReference type="SUPFAM" id="SSF55681">
    <property type="entry name" value="Class II aaRS and biotin synthetases"/>
    <property type="match status" value="1"/>
</dbReference>
<dbReference type="SUPFAM" id="SSF46589">
    <property type="entry name" value="tRNA-binding arm"/>
    <property type="match status" value="1"/>
</dbReference>
<dbReference type="PROSITE" id="PS50862">
    <property type="entry name" value="AA_TRNA_LIGASE_II"/>
    <property type="match status" value="1"/>
</dbReference>
<name>SYFA_RICCK</name>
<proteinExistence type="inferred from homology"/>
<reference key="1">
    <citation type="submission" date="2007-09" db="EMBL/GenBank/DDBJ databases">
        <title>Complete genome sequence of Rickettsia canadensis.</title>
        <authorList>
            <person name="Madan A."/>
            <person name="Fahey J."/>
            <person name="Helton E."/>
            <person name="Ketteman M."/>
            <person name="Madan A."/>
            <person name="Rodrigues S."/>
            <person name="Sanchez A."/>
            <person name="Whiting M."/>
            <person name="Dasch G."/>
            <person name="Eremeeva M."/>
        </authorList>
    </citation>
    <scope>NUCLEOTIDE SEQUENCE [LARGE SCALE GENOMIC DNA]</scope>
    <source>
        <strain>McKiel</strain>
    </source>
</reference>